<dbReference type="PIR" id="S13049">
    <property type="entry name" value="S13049"/>
</dbReference>
<dbReference type="SMR" id="P23108"/>
<dbReference type="FunCoup" id="P23108">
    <property type="interactions" value="33"/>
</dbReference>
<dbReference type="STRING" id="9986.ENSOCUP00000023316"/>
<dbReference type="GlyCosmos" id="P23108">
    <property type="glycosylation" value="1 site, No reported glycans"/>
</dbReference>
<dbReference type="PaxDb" id="9986-ENSOCUP00000023316"/>
<dbReference type="eggNOG" id="ENOG502RZF4">
    <property type="taxonomic scope" value="Eukaryota"/>
</dbReference>
<dbReference type="InParanoid" id="P23108"/>
<dbReference type="Proteomes" id="UP000001811">
    <property type="component" value="Unplaced"/>
</dbReference>
<dbReference type="GO" id="GO:0071756">
    <property type="term" value="C:pentameric IgM immunoglobulin complex"/>
    <property type="evidence" value="ECO:0000250"/>
    <property type="project" value="UniProtKB"/>
</dbReference>
<dbReference type="GO" id="GO:0071751">
    <property type="term" value="C:secretory IgA immunoglobulin complex"/>
    <property type="evidence" value="ECO:0000250"/>
    <property type="project" value="UniProtKB"/>
</dbReference>
<dbReference type="GO" id="GO:0034987">
    <property type="term" value="F:immunoglobulin receptor binding"/>
    <property type="evidence" value="ECO:0007669"/>
    <property type="project" value="TreeGrafter"/>
</dbReference>
<dbReference type="GO" id="GO:0006959">
    <property type="term" value="P:humoral immune response"/>
    <property type="evidence" value="ECO:0007669"/>
    <property type="project" value="TreeGrafter"/>
</dbReference>
<dbReference type="InterPro" id="IPR024110">
    <property type="entry name" value="Ig_J"/>
</dbReference>
<dbReference type="PANTHER" id="PTHR10070">
    <property type="entry name" value="IMMUNOGLOBULIN J CHAIN"/>
    <property type="match status" value="1"/>
</dbReference>
<dbReference type="PANTHER" id="PTHR10070:SF2">
    <property type="entry name" value="IMMUNOGLOBULIN J CHAIN"/>
    <property type="match status" value="1"/>
</dbReference>
<dbReference type="Pfam" id="PF15097">
    <property type="entry name" value="Ig_J_chain"/>
    <property type="match status" value="1"/>
</dbReference>
<organism>
    <name type="scientific">Oryctolagus cuniculus</name>
    <name type="common">Rabbit</name>
    <dbReference type="NCBI Taxonomy" id="9986"/>
    <lineage>
        <taxon>Eukaryota</taxon>
        <taxon>Metazoa</taxon>
        <taxon>Chordata</taxon>
        <taxon>Craniata</taxon>
        <taxon>Vertebrata</taxon>
        <taxon>Euteleostomi</taxon>
        <taxon>Mammalia</taxon>
        <taxon>Eutheria</taxon>
        <taxon>Euarchontoglires</taxon>
        <taxon>Glires</taxon>
        <taxon>Lagomorpha</taxon>
        <taxon>Leporidae</taxon>
        <taxon>Oryctolagus</taxon>
    </lineage>
</organism>
<reference key="1">
    <citation type="journal article" date="1990" name="Biochem. J.">
        <title>The amino acid sequence of rabbit J chain in secretory immunoglobulin A.</title>
        <authorList>
            <person name="Hughes G.J."/>
            <person name="Frutiger S."/>
            <person name="Paquet N."/>
            <person name="Jaton J.-C."/>
        </authorList>
    </citation>
    <scope>PROTEIN SEQUENCE</scope>
</reference>
<gene>
    <name evidence="1" type="primary">JCHAIN</name>
    <name type="synonym">IGJ</name>
</gene>
<sequence>EDESTVLVDNKCQCVRITSRIIRDPDNPSEDIVERNIRIIVPLNTRENISDPTSPLRTEFKYNLANLCKKCDPTEIELDNQVFTASQSNICPDDDYSETCYTYDRNKCYTTLVPITHRGGTRMVKATLTPDSCYPD</sequence>
<proteinExistence type="evidence at protein level"/>
<comment type="function">
    <text evidence="2">Serves to link two monomer units of either IgM or IgA. In the case of IgM, the J chain-joined dimer is a nucleating unit for the IgM pentamer, and in the case of IgA it induces dimers and/or larger polymers. It also helps to bind these immunoglobulins to secretory component.</text>
</comment>
<comment type="subunit">
    <text evidence="1">Part of the secretory IgA (sIgA) complex that consists of two, four or five IgA monomers, and two additional non-Ig polypeptides, namely the JCHAIN and the secretory component (the proteolytic product of PIGR). Part of the secretory IgM (sIgM) complex that consist of five IgM monomers, and two additional non-Ig polypeptides, namely the JCHAIN and the secretory component (the proteolytic product of PIGR). JCHAIN-containing IgM interacts (via CH4 domain) with FCRM (via Ig-like domain).</text>
</comment>
<comment type="subcellular location">
    <subcellularLocation>
        <location evidence="2">Secreted</location>
    </subcellularLocation>
</comment>
<name>IGJ_RABIT</name>
<evidence type="ECO:0000250" key="1">
    <source>
        <dbReference type="UniProtKB" id="P01591"/>
    </source>
</evidence>
<evidence type="ECO:0000250" key="2">
    <source>
        <dbReference type="UniProtKB" id="P01592"/>
    </source>
</evidence>
<feature type="chain" id="PRO_0000084175" description="Immunoglobulin J chain">
    <location>
        <begin position="1"/>
        <end position="136"/>
    </location>
</feature>
<feature type="glycosylation site" description="N-linked (GlcNAc...) (complex) asparagine" evidence="1">
    <location>
        <position position="48"/>
    </location>
</feature>
<feature type="disulfide bond" evidence="1">
    <location>
        <begin position="12"/>
        <end position="100"/>
    </location>
</feature>
<feature type="disulfide bond" description="Interchain (with heavy chain)" evidence="1">
    <location>
        <position position="14"/>
    </location>
</feature>
<feature type="disulfide bond" description="Interchain (with heavy chain)" evidence="1">
    <location>
        <position position="68"/>
    </location>
</feature>
<feature type="disulfide bond" evidence="1">
    <location>
        <begin position="71"/>
        <end position="91"/>
    </location>
</feature>
<feature type="disulfide bond" evidence="1">
    <location>
        <begin position="108"/>
        <end position="133"/>
    </location>
</feature>
<accession>P23108</accession>
<keyword id="KW-0903">Direct protein sequencing</keyword>
<keyword id="KW-1015">Disulfide bond</keyword>
<keyword id="KW-0325">Glycoprotein</keyword>
<keyword id="KW-1185">Reference proteome</keyword>
<keyword id="KW-0964">Secreted</keyword>
<protein>
    <recommendedName>
        <fullName>Immunoglobulin J chain</fullName>
    </recommendedName>
</protein>